<feature type="chain" id="PRO_1000058916" description="Adenylate kinase">
    <location>
        <begin position="1"/>
        <end position="212"/>
    </location>
</feature>
<feature type="region of interest" description="NMP" evidence="1">
    <location>
        <begin position="30"/>
        <end position="59"/>
    </location>
</feature>
<feature type="region of interest" description="LID" evidence="1">
    <location>
        <begin position="127"/>
        <end position="159"/>
    </location>
</feature>
<feature type="binding site" evidence="1">
    <location>
        <begin position="10"/>
        <end position="15"/>
    </location>
    <ligand>
        <name>ATP</name>
        <dbReference type="ChEBI" id="CHEBI:30616"/>
    </ligand>
</feature>
<feature type="binding site" evidence="1">
    <location>
        <position position="31"/>
    </location>
    <ligand>
        <name>AMP</name>
        <dbReference type="ChEBI" id="CHEBI:456215"/>
    </ligand>
</feature>
<feature type="binding site" evidence="1">
    <location>
        <position position="36"/>
    </location>
    <ligand>
        <name>AMP</name>
        <dbReference type="ChEBI" id="CHEBI:456215"/>
    </ligand>
</feature>
<feature type="binding site" evidence="1">
    <location>
        <begin position="57"/>
        <end position="59"/>
    </location>
    <ligand>
        <name>AMP</name>
        <dbReference type="ChEBI" id="CHEBI:456215"/>
    </ligand>
</feature>
<feature type="binding site" evidence="1">
    <location>
        <begin position="86"/>
        <end position="89"/>
    </location>
    <ligand>
        <name>AMP</name>
        <dbReference type="ChEBI" id="CHEBI:456215"/>
    </ligand>
</feature>
<feature type="binding site" evidence="1">
    <location>
        <position position="93"/>
    </location>
    <ligand>
        <name>AMP</name>
        <dbReference type="ChEBI" id="CHEBI:456215"/>
    </ligand>
</feature>
<feature type="binding site" evidence="1">
    <location>
        <position position="128"/>
    </location>
    <ligand>
        <name>ATP</name>
        <dbReference type="ChEBI" id="CHEBI:30616"/>
    </ligand>
</feature>
<feature type="binding site" evidence="1">
    <location>
        <begin position="137"/>
        <end position="138"/>
    </location>
    <ligand>
        <name>ATP</name>
        <dbReference type="ChEBI" id="CHEBI:30616"/>
    </ligand>
</feature>
<feature type="binding site" evidence="1">
    <location>
        <position position="156"/>
    </location>
    <ligand>
        <name>AMP</name>
        <dbReference type="ChEBI" id="CHEBI:456215"/>
    </ligand>
</feature>
<feature type="binding site" evidence="1">
    <location>
        <position position="167"/>
    </location>
    <ligand>
        <name>AMP</name>
        <dbReference type="ChEBI" id="CHEBI:456215"/>
    </ligand>
</feature>
<feature type="binding site" evidence="1">
    <location>
        <position position="195"/>
    </location>
    <ligand>
        <name>ATP</name>
        <dbReference type="ChEBI" id="CHEBI:30616"/>
    </ligand>
</feature>
<accession>Q1J8Z2</accession>
<protein>
    <recommendedName>
        <fullName evidence="1">Adenylate kinase</fullName>
        <shortName evidence="1">AK</shortName>
        <ecNumber evidence="1">2.7.4.3</ecNumber>
    </recommendedName>
    <alternativeName>
        <fullName evidence="1">ATP-AMP transphosphorylase</fullName>
    </alternativeName>
    <alternativeName>
        <fullName evidence="1">ATP:AMP phosphotransferase</fullName>
    </alternativeName>
    <alternativeName>
        <fullName evidence="1">Adenylate monophosphate kinase</fullName>
    </alternativeName>
</protein>
<evidence type="ECO:0000255" key="1">
    <source>
        <dbReference type="HAMAP-Rule" id="MF_00235"/>
    </source>
</evidence>
<organism>
    <name type="scientific">Streptococcus pyogenes serotype M4 (strain MGAS10750)</name>
    <dbReference type="NCBI Taxonomy" id="370554"/>
    <lineage>
        <taxon>Bacteria</taxon>
        <taxon>Bacillati</taxon>
        <taxon>Bacillota</taxon>
        <taxon>Bacilli</taxon>
        <taxon>Lactobacillales</taxon>
        <taxon>Streptococcaceae</taxon>
        <taxon>Streptococcus</taxon>
    </lineage>
</organism>
<proteinExistence type="inferred from homology"/>
<name>KAD_STRPF</name>
<dbReference type="EC" id="2.7.4.3" evidence="1"/>
<dbReference type="EMBL" id="CP000262">
    <property type="protein sequence ID" value="ABF37019.1"/>
    <property type="molecule type" value="Genomic_DNA"/>
</dbReference>
<dbReference type="SMR" id="Q1J8Z2"/>
<dbReference type="KEGG" id="spi:MGAS10750_Spy0069"/>
<dbReference type="HOGENOM" id="CLU_032354_1_2_9"/>
<dbReference type="UniPathway" id="UPA00588">
    <property type="reaction ID" value="UER00649"/>
</dbReference>
<dbReference type="Proteomes" id="UP000002434">
    <property type="component" value="Chromosome"/>
</dbReference>
<dbReference type="GO" id="GO:0005737">
    <property type="term" value="C:cytoplasm"/>
    <property type="evidence" value="ECO:0007669"/>
    <property type="project" value="UniProtKB-SubCell"/>
</dbReference>
<dbReference type="GO" id="GO:0004017">
    <property type="term" value="F:adenylate kinase activity"/>
    <property type="evidence" value="ECO:0007669"/>
    <property type="project" value="UniProtKB-UniRule"/>
</dbReference>
<dbReference type="GO" id="GO:0005524">
    <property type="term" value="F:ATP binding"/>
    <property type="evidence" value="ECO:0007669"/>
    <property type="project" value="UniProtKB-UniRule"/>
</dbReference>
<dbReference type="GO" id="GO:0044209">
    <property type="term" value="P:AMP salvage"/>
    <property type="evidence" value="ECO:0007669"/>
    <property type="project" value="UniProtKB-UniRule"/>
</dbReference>
<dbReference type="CDD" id="cd01428">
    <property type="entry name" value="ADK"/>
    <property type="match status" value="1"/>
</dbReference>
<dbReference type="FunFam" id="3.40.50.300:FF:000106">
    <property type="entry name" value="Adenylate kinase mitochondrial"/>
    <property type="match status" value="1"/>
</dbReference>
<dbReference type="Gene3D" id="3.40.50.300">
    <property type="entry name" value="P-loop containing nucleotide triphosphate hydrolases"/>
    <property type="match status" value="1"/>
</dbReference>
<dbReference type="HAMAP" id="MF_00235">
    <property type="entry name" value="Adenylate_kinase_Adk"/>
    <property type="match status" value="1"/>
</dbReference>
<dbReference type="InterPro" id="IPR006259">
    <property type="entry name" value="Adenyl_kin_sub"/>
</dbReference>
<dbReference type="InterPro" id="IPR000850">
    <property type="entry name" value="Adenylat/UMP-CMP_kin"/>
</dbReference>
<dbReference type="InterPro" id="IPR033690">
    <property type="entry name" value="Adenylat_kinase_CS"/>
</dbReference>
<dbReference type="InterPro" id="IPR027417">
    <property type="entry name" value="P-loop_NTPase"/>
</dbReference>
<dbReference type="NCBIfam" id="TIGR01351">
    <property type="entry name" value="adk"/>
    <property type="match status" value="1"/>
</dbReference>
<dbReference type="NCBIfam" id="NF001380">
    <property type="entry name" value="PRK00279.1-2"/>
    <property type="match status" value="1"/>
</dbReference>
<dbReference type="NCBIfam" id="NF001381">
    <property type="entry name" value="PRK00279.1-3"/>
    <property type="match status" value="1"/>
</dbReference>
<dbReference type="NCBIfam" id="NF001382">
    <property type="entry name" value="PRK00279.1-4"/>
    <property type="match status" value="1"/>
</dbReference>
<dbReference type="NCBIfam" id="NF011100">
    <property type="entry name" value="PRK14527.1"/>
    <property type="match status" value="1"/>
</dbReference>
<dbReference type="PANTHER" id="PTHR23359">
    <property type="entry name" value="NUCLEOTIDE KINASE"/>
    <property type="match status" value="1"/>
</dbReference>
<dbReference type="Pfam" id="PF00406">
    <property type="entry name" value="ADK"/>
    <property type="match status" value="1"/>
</dbReference>
<dbReference type="PRINTS" id="PR00094">
    <property type="entry name" value="ADENYLTKNASE"/>
</dbReference>
<dbReference type="SUPFAM" id="SSF52540">
    <property type="entry name" value="P-loop containing nucleoside triphosphate hydrolases"/>
    <property type="match status" value="1"/>
</dbReference>
<dbReference type="PROSITE" id="PS00113">
    <property type="entry name" value="ADENYLATE_KINASE"/>
    <property type="match status" value="1"/>
</dbReference>
<comment type="function">
    <text evidence="1">Catalyzes the reversible transfer of the terminal phosphate group between ATP and AMP. Plays an important role in cellular energy homeostasis and in adenine nucleotide metabolism.</text>
</comment>
<comment type="catalytic activity">
    <reaction evidence="1">
        <text>AMP + ATP = 2 ADP</text>
        <dbReference type="Rhea" id="RHEA:12973"/>
        <dbReference type="ChEBI" id="CHEBI:30616"/>
        <dbReference type="ChEBI" id="CHEBI:456215"/>
        <dbReference type="ChEBI" id="CHEBI:456216"/>
        <dbReference type="EC" id="2.7.4.3"/>
    </reaction>
</comment>
<comment type="pathway">
    <text evidence="1">Purine metabolism; AMP biosynthesis via salvage pathway; AMP from ADP: step 1/1.</text>
</comment>
<comment type="subunit">
    <text evidence="1">Monomer.</text>
</comment>
<comment type="subcellular location">
    <subcellularLocation>
        <location evidence="1">Cytoplasm</location>
    </subcellularLocation>
</comment>
<comment type="domain">
    <text evidence="1">Consists of three domains, a large central CORE domain and two small peripheral domains, NMPbind and LID, which undergo movements during catalysis. The LID domain closes over the site of phosphoryl transfer upon ATP binding. Assembling and dissambling the active center during each catalytic cycle provides an effective means to prevent ATP hydrolysis.</text>
</comment>
<comment type="similarity">
    <text evidence="1">Belongs to the adenylate kinase family.</text>
</comment>
<sequence>MNLLIMGLPGAGKGTQAAKIVEEFGVAHISTGDMFRAAMANQTEMGRLAKSYIDKGELVPDEVTNGIVKERLAEDDIAEKGFLLDGYPRTIEQAHALDATLEELGLRLDGVINIKVDPSCLVERLSGRIINRKTGETFHKVFNPPVDYKEEDYYQREDDKPETVKRRLDVNMAQGEPILEHYRKLGLVTDIEGNQEITDVFADVEKALLELK</sequence>
<reference key="1">
    <citation type="journal article" date="2006" name="Proc. Natl. Acad. Sci. U.S.A.">
        <title>Molecular genetic anatomy of inter- and intraserotype variation in the human bacterial pathogen group A Streptococcus.</title>
        <authorList>
            <person name="Beres S.B."/>
            <person name="Richter E.W."/>
            <person name="Nagiec M.J."/>
            <person name="Sumby P."/>
            <person name="Porcella S.F."/>
            <person name="DeLeo F.R."/>
            <person name="Musser J.M."/>
        </authorList>
    </citation>
    <scope>NUCLEOTIDE SEQUENCE [LARGE SCALE GENOMIC DNA]</scope>
    <source>
        <strain>MGAS10750</strain>
    </source>
</reference>
<gene>
    <name evidence="1" type="primary">adk</name>
    <name type="ordered locus">MGAS10750_Spy0069</name>
</gene>
<keyword id="KW-0067">ATP-binding</keyword>
<keyword id="KW-0963">Cytoplasm</keyword>
<keyword id="KW-0418">Kinase</keyword>
<keyword id="KW-0545">Nucleotide biosynthesis</keyword>
<keyword id="KW-0547">Nucleotide-binding</keyword>
<keyword id="KW-0808">Transferase</keyword>